<name>CITA_MONRU</name>
<comment type="function">
    <text evidence="3 4">Non-reducing polyketide synthase; part of the gene cluster that mediates the biosynthesis of the mycotoxin citrinin, a hepato-nephrotoxic compound to humans due to inhibition of respiration complex III (PubMed:29189834, Ref.1). The pathway begins with the synthesis of a keto-aldehyde intermediate by the citrinin PKS (pksCT also named citS) from successive condensations of 4 malonyl-CoA units, presumably with a simple acetyl-CoA starter unit (PubMed:29189834, Ref.1). Release of the keto-aldehyde intermediate is consistent with the presence of the C-terminal reductive release domain (Ref.1). CitA collaborates with citS by catalyzing the hydrolysis of ACP-bound acyl intermediates to free the ACP from stalled intermediates (PubMed:29189834). CitB then catalyzes the oxidation of the C-12 methyl of the ketone intermediate to an alcohol intermediate which is further oxidized by the oxidoreductase citC to produce a bisaldehyde intermediate (Ref.1). The fourth catalytic step is catalyzed by the citD aldehyde dehydrogenase (Ref.1). The final transformation is the reduction of C-3 by citE to provide the chemically stable citrinin nucleus (Ref.1). CitE appears highly selective for its substrate as its presence in any context other than a full complement of citS and citA-D does not result in observable new compounds (Ref.1).</text>
</comment>
<comment type="pathway">
    <text evidence="4">Mycotoxin biosynthesis.</text>
</comment>
<comment type="induction">
    <text evidence="2">Expression is stimulated under green light conditions (PubMed:27998068).</text>
</comment>
<comment type="disruption phenotype">
    <text evidence="4">Leads to a significant reduction (over 95%), but not abolition, of citrinin biosynthesis (Ref.1).</text>
</comment>
<comment type="similarity">
    <text evidence="6">Belongs to the LovG family.</text>
</comment>
<feature type="chain" id="PRO_0000440315" description="Esterase citA">
    <location>
        <begin position="1"/>
        <end position="261"/>
    </location>
</feature>
<feature type="active site" description="Charge relay system" evidence="3">
    <location>
        <position position="122"/>
    </location>
</feature>
<feature type="active site" description="Charge relay system" evidence="1">
    <location>
        <position position="207"/>
    </location>
</feature>
<feature type="active site" description="Charge relay system" evidence="1">
    <location>
        <position position="235"/>
    </location>
</feature>
<feature type="mutagenesis site" description="Impairs the catalytic activity." evidence="3">
    <original>S</original>
    <variation>A</variation>
    <location>
        <position position="122"/>
    </location>
</feature>
<keyword id="KW-0378">Hydrolase</keyword>
<organism>
    <name type="scientific">Monascus ruber</name>
    <name type="common">Mold</name>
    <dbReference type="NCBI Taxonomy" id="89489"/>
    <lineage>
        <taxon>Eukaryota</taxon>
        <taxon>Fungi</taxon>
        <taxon>Dikarya</taxon>
        <taxon>Ascomycota</taxon>
        <taxon>Pezizomycotina</taxon>
        <taxon>Eurotiomycetes</taxon>
        <taxon>Eurotiomycetidae</taxon>
        <taxon>Eurotiales</taxon>
        <taxon>Aspergillaceae</taxon>
        <taxon>Monascus</taxon>
    </lineage>
</organism>
<reference key="1">
    <citation type="journal article" date="2016" name="Chem. Sci.">
        <title>The molecular steps of citrinin biosynthesis in fungi.</title>
        <authorList>
            <person name="He Y."/>
            <person name="Cox R.J."/>
        </authorList>
    </citation>
    <scope>NUCLEOTIDE SEQUENCE [GENOMIC DNA]</scope>
    <scope>FUNCTION</scope>
    <scope>DISRUPTION PHENOTYPE</scope>
    <scope>CATALYTIC ACTIVITY</scope>
    <scope>PATHWAY</scope>
    <source>
        <strain>M7</strain>
    </source>
</reference>
<reference key="2">
    <citation type="journal article" date="2016" name="J. Agric. Food Chem.">
        <title>Effects of light intensity and color on the biomass, extracellular red pigment, and citrinin production of Monascus ruber.</title>
        <authorList>
            <person name="Wang L."/>
            <person name="Dai Y."/>
            <person name="Chen W."/>
            <person name="Shao Y."/>
            <person name="Chen F."/>
        </authorList>
    </citation>
    <scope>INDUCTION</scope>
    <source>
        <strain>M7</strain>
    </source>
</reference>
<reference key="3">
    <citation type="journal article" date="2017" name="Chem. Commun. (Camb.)">
        <title>In trans hydrolysis of carrier protein-bound acyl intermediates by CitA during citrinin biosynthesis.</title>
        <authorList>
            <person name="Storm P.A."/>
            <person name="Townsend C.A."/>
        </authorList>
    </citation>
    <scope>FUNCTION</scope>
    <scope>CATALYTIC ACTIVITY</scope>
    <scope>ACTIVE SITE</scope>
    <scope>MUTAGENESIS OF SER-122</scope>
    <scope>PATHWAY</scope>
</reference>
<evidence type="ECO:0000250" key="1">
    <source>
        <dbReference type="UniProtKB" id="P38777"/>
    </source>
</evidence>
<evidence type="ECO:0000269" key="2">
    <source>
    </source>
</evidence>
<evidence type="ECO:0000269" key="3">
    <source>
    </source>
</evidence>
<evidence type="ECO:0000269" key="4">
    <source ref="1"/>
</evidence>
<evidence type="ECO:0000303" key="5">
    <source ref="1"/>
</evidence>
<evidence type="ECO:0000305" key="6"/>
<gene>
    <name evidence="5" type="primary">citA</name>
    <name evidence="5" type="synonym">mrl1</name>
</gene>
<dbReference type="EC" id="3.1.2.-" evidence="3"/>
<dbReference type="EMBL" id="KT781075">
    <property type="protein sequence ID" value="ALI92654.1"/>
    <property type="molecule type" value="Genomic_DNA"/>
</dbReference>
<dbReference type="SMR" id="A0A161CKG1"/>
<dbReference type="ESTHER" id="monpu-cita">
    <property type="family name" value="FSH1"/>
</dbReference>
<dbReference type="GO" id="GO:0005737">
    <property type="term" value="C:cytoplasm"/>
    <property type="evidence" value="ECO:0007669"/>
    <property type="project" value="TreeGrafter"/>
</dbReference>
<dbReference type="GO" id="GO:0005634">
    <property type="term" value="C:nucleus"/>
    <property type="evidence" value="ECO:0007669"/>
    <property type="project" value="TreeGrafter"/>
</dbReference>
<dbReference type="GO" id="GO:0016787">
    <property type="term" value="F:hydrolase activity"/>
    <property type="evidence" value="ECO:0007669"/>
    <property type="project" value="UniProtKB-KW"/>
</dbReference>
<dbReference type="GO" id="GO:0044550">
    <property type="term" value="P:secondary metabolite biosynthetic process"/>
    <property type="evidence" value="ECO:0007669"/>
    <property type="project" value="TreeGrafter"/>
</dbReference>
<dbReference type="Gene3D" id="3.40.50.1820">
    <property type="entry name" value="alpha/beta hydrolase"/>
    <property type="match status" value="1"/>
</dbReference>
<dbReference type="InterPro" id="IPR029058">
    <property type="entry name" value="AB_hydrolase_fold"/>
</dbReference>
<dbReference type="InterPro" id="IPR005645">
    <property type="entry name" value="FSH-like_dom"/>
</dbReference>
<dbReference type="InterPro" id="IPR050593">
    <property type="entry name" value="LovG"/>
</dbReference>
<dbReference type="PANTHER" id="PTHR48070:SF3">
    <property type="entry name" value="ESTERASE DBAE-RELATED"/>
    <property type="match status" value="1"/>
</dbReference>
<dbReference type="PANTHER" id="PTHR48070">
    <property type="entry name" value="ESTERASE OVCA2"/>
    <property type="match status" value="1"/>
</dbReference>
<dbReference type="Pfam" id="PF03959">
    <property type="entry name" value="FSH1"/>
    <property type="match status" value="1"/>
</dbReference>
<dbReference type="SUPFAM" id="SSF53474">
    <property type="entry name" value="alpha/beta-Hydrolases"/>
    <property type="match status" value="1"/>
</dbReference>
<protein>
    <recommendedName>
        <fullName evidence="5">Esterase citA</fullName>
        <ecNumber evidence="3">3.1.2.-</ecNumber>
    </recommendedName>
    <alternativeName>
        <fullName evidence="5">Citrinin synthesis protein A</fullName>
    </alternativeName>
</protein>
<proteinExistence type="evidence at protein level"/>
<sequence>MVQTNLEVVDDTLHLPRILCLHGGGSNAAIFQAQCRRLIAQLRSEFRFVFAQAPFLSDAEPNVMSVYSQWGPFRRWLRWCPDHPEIRPEDAIRAIDDCLEDVKRQDDAKGATGAWVGLLGFSQGAKMCASLLYRQQIRQELRGRSFAGSDYRFGVLLAGRAPLVSLDPDLDLNSSLPDVSQITDAKYHGPSQDVLRIPTVHVHGMRDPHVDLHRQLFEEFCAPESRRLVEWDGDHRVPLKYNDVSLVAYQIRELATQTGAP</sequence>
<accession>A0A161CKG1</accession>